<reference key="1">
    <citation type="journal article" date="1999" name="Biochem. Soc. Trans.">
        <title>VIT-1: the second member of a new branch of the von Willebrand factor A domain superfamily.</title>
        <authorList>
            <person name="Mayne R."/>
            <person name="Ren Z.-X."/>
            <person name="Liu J.G."/>
            <person name="Cook T."/>
            <person name="Carson M."/>
            <person name="Narayana S."/>
        </authorList>
    </citation>
    <scope>NUCLEOTIDE SEQUENCE [MRNA] (ISOFORM 1)</scope>
    <source>
        <strain>BALB/cJ</strain>
    </source>
</reference>
<reference key="2">
    <citation type="journal article" date="2005" name="Science">
        <title>The transcriptional landscape of the mammalian genome.</title>
        <authorList>
            <person name="Carninci P."/>
            <person name="Kasukawa T."/>
            <person name="Katayama S."/>
            <person name="Gough J."/>
            <person name="Frith M.C."/>
            <person name="Maeda N."/>
            <person name="Oyama R."/>
            <person name="Ravasi T."/>
            <person name="Lenhard B."/>
            <person name="Wells C."/>
            <person name="Kodzius R."/>
            <person name="Shimokawa K."/>
            <person name="Bajic V.B."/>
            <person name="Brenner S.E."/>
            <person name="Batalov S."/>
            <person name="Forrest A.R."/>
            <person name="Zavolan M."/>
            <person name="Davis M.J."/>
            <person name="Wilming L.G."/>
            <person name="Aidinis V."/>
            <person name="Allen J.E."/>
            <person name="Ambesi-Impiombato A."/>
            <person name="Apweiler R."/>
            <person name="Aturaliya R.N."/>
            <person name="Bailey T.L."/>
            <person name="Bansal M."/>
            <person name="Baxter L."/>
            <person name="Beisel K.W."/>
            <person name="Bersano T."/>
            <person name="Bono H."/>
            <person name="Chalk A.M."/>
            <person name="Chiu K.P."/>
            <person name="Choudhary V."/>
            <person name="Christoffels A."/>
            <person name="Clutterbuck D.R."/>
            <person name="Crowe M.L."/>
            <person name="Dalla E."/>
            <person name="Dalrymple B.P."/>
            <person name="de Bono B."/>
            <person name="Della Gatta G."/>
            <person name="di Bernardo D."/>
            <person name="Down T."/>
            <person name="Engstrom P."/>
            <person name="Fagiolini M."/>
            <person name="Faulkner G."/>
            <person name="Fletcher C.F."/>
            <person name="Fukushima T."/>
            <person name="Furuno M."/>
            <person name="Futaki S."/>
            <person name="Gariboldi M."/>
            <person name="Georgii-Hemming P."/>
            <person name="Gingeras T.R."/>
            <person name="Gojobori T."/>
            <person name="Green R.E."/>
            <person name="Gustincich S."/>
            <person name="Harbers M."/>
            <person name="Hayashi Y."/>
            <person name="Hensch T.K."/>
            <person name="Hirokawa N."/>
            <person name="Hill D."/>
            <person name="Huminiecki L."/>
            <person name="Iacono M."/>
            <person name="Ikeo K."/>
            <person name="Iwama A."/>
            <person name="Ishikawa T."/>
            <person name="Jakt M."/>
            <person name="Kanapin A."/>
            <person name="Katoh M."/>
            <person name="Kawasawa Y."/>
            <person name="Kelso J."/>
            <person name="Kitamura H."/>
            <person name="Kitano H."/>
            <person name="Kollias G."/>
            <person name="Krishnan S.P."/>
            <person name="Kruger A."/>
            <person name="Kummerfeld S.K."/>
            <person name="Kurochkin I.V."/>
            <person name="Lareau L.F."/>
            <person name="Lazarevic D."/>
            <person name="Lipovich L."/>
            <person name="Liu J."/>
            <person name="Liuni S."/>
            <person name="McWilliam S."/>
            <person name="Madan Babu M."/>
            <person name="Madera M."/>
            <person name="Marchionni L."/>
            <person name="Matsuda H."/>
            <person name="Matsuzawa S."/>
            <person name="Miki H."/>
            <person name="Mignone F."/>
            <person name="Miyake S."/>
            <person name="Morris K."/>
            <person name="Mottagui-Tabar S."/>
            <person name="Mulder N."/>
            <person name="Nakano N."/>
            <person name="Nakauchi H."/>
            <person name="Ng P."/>
            <person name="Nilsson R."/>
            <person name="Nishiguchi S."/>
            <person name="Nishikawa S."/>
            <person name="Nori F."/>
            <person name="Ohara O."/>
            <person name="Okazaki Y."/>
            <person name="Orlando V."/>
            <person name="Pang K.C."/>
            <person name="Pavan W.J."/>
            <person name="Pavesi G."/>
            <person name="Pesole G."/>
            <person name="Petrovsky N."/>
            <person name="Piazza S."/>
            <person name="Reed J."/>
            <person name="Reid J.F."/>
            <person name="Ring B.Z."/>
            <person name="Ringwald M."/>
            <person name="Rost B."/>
            <person name="Ruan Y."/>
            <person name="Salzberg S.L."/>
            <person name="Sandelin A."/>
            <person name="Schneider C."/>
            <person name="Schoenbach C."/>
            <person name="Sekiguchi K."/>
            <person name="Semple C.A."/>
            <person name="Seno S."/>
            <person name="Sessa L."/>
            <person name="Sheng Y."/>
            <person name="Shibata Y."/>
            <person name="Shimada H."/>
            <person name="Shimada K."/>
            <person name="Silva D."/>
            <person name="Sinclair B."/>
            <person name="Sperling S."/>
            <person name="Stupka E."/>
            <person name="Sugiura K."/>
            <person name="Sultana R."/>
            <person name="Takenaka Y."/>
            <person name="Taki K."/>
            <person name="Tammoja K."/>
            <person name="Tan S.L."/>
            <person name="Tang S."/>
            <person name="Taylor M.S."/>
            <person name="Tegner J."/>
            <person name="Teichmann S.A."/>
            <person name="Ueda H.R."/>
            <person name="van Nimwegen E."/>
            <person name="Verardo R."/>
            <person name="Wei C.L."/>
            <person name="Yagi K."/>
            <person name="Yamanishi H."/>
            <person name="Zabarovsky E."/>
            <person name="Zhu S."/>
            <person name="Zimmer A."/>
            <person name="Hide W."/>
            <person name="Bult C."/>
            <person name="Grimmond S.M."/>
            <person name="Teasdale R.D."/>
            <person name="Liu E.T."/>
            <person name="Brusic V."/>
            <person name="Quackenbush J."/>
            <person name="Wahlestedt C."/>
            <person name="Mattick J.S."/>
            <person name="Hume D.A."/>
            <person name="Kai C."/>
            <person name="Sasaki D."/>
            <person name="Tomaru Y."/>
            <person name="Fukuda S."/>
            <person name="Kanamori-Katayama M."/>
            <person name="Suzuki M."/>
            <person name="Aoki J."/>
            <person name="Arakawa T."/>
            <person name="Iida J."/>
            <person name="Imamura K."/>
            <person name="Itoh M."/>
            <person name="Kato T."/>
            <person name="Kawaji H."/>
            <person name="Kawagashira N."/>
            <person name="Kawashima T."/>
            <person name="Kojima M."/>
            <person name="Kondo S."/>
            <person name="Konno H."/>
            <person name="Nakano K."/>
            <person name="Ninomiya N."/>
            <person name="Nishio T."/>
            <person name="Okada M."/>
            <person name="Plessy C."/>
            <person name="Shibata K."/>
            <person name="Shiraki T."/>
            <person name="Suzuki S."/>
            <person name="Tagami M."/>
            <person name="Waki K."/>
            <person name="Watahiki A."/>
            <person name="Okamura-Oho Y."/>
            <person name="Suzuki H."/>
            <person name="Kawai J."/>
            <person name="Hayashizaki Y."/>
        </authorList>
    </citation>
    <scope>NUCLEOTIDE SEQUENCE [LARGE SCALE MRNA] (ISOFORMS 1 AND 2)</scope>
    <source>
        <strain>C57BL/6J</strain>
        <tissue>Inner ear</tissue>
        <tissue>Spinal ganglion</tissue>
    </source>
</reference>
<reference key="3">
    <citation type="journal article" date="2004" name="Genome Res.">
        <title>The status, quality, and expansion of the NIH full-length cDNA project: the Mammalian Gene Collection (MGC).</title>
        <authorList>
            <consortium name="The MGC Project Team"/>
        </authorList>
    </citation>
    <scope>NUCLEOTIDE SEQUENCE [LARGE SCALE MRNA] (ISOFORM 1)</scope>
    <source>
        <tissue>Eye</tissue>
    </source>
</reference>
<reference key="4">
    <citation type="journal article" date="2008" name="Proc. Natl. Acad. Sci. U.S.A.">
        <title>Transcriptome-based systematic identification of extracellular matrix proteins.</title>
        <authorList>
            <person name="Manabe R."/>
            <person name="Tsutsui K."/>
            <person name="Yamada T."/>
            <person name="Kimura M."/>
            <person name="Nakano I."/>
            <person name="Shimono C."/>
            <person name="Sanzen N."/>
            <person name="Furutani Y."/>
            <person name="Fukuda T."/>
            <person name="Oguri Y."/>
            <person name="Shimamoto K."/>
            <person name="Kiyozumi D."/>
            <person name="Sato Y."/>
            <person name="Sado Y."/>
            <person name="Senoo H."/>
            <person name="Yamashina S."/>
            <person name="Fukuda S."/>
            <person name="Kawai J."/>
            <person name="Sugiura N."/>
            <person name="Kimata K."/>
            <person name="Hayashizaki Y."/>
            <person name="Sekiguchi K."/>
        </authorList>
    </citation>
    <scope>FUNCTION</scope>
    <scope>SUBUNIT</scope>
    <scope>SUBCELLULAR LOCATION</scope>
    <scope>DEVELOPMENTAL STAGE</scope>
</reference>
<reference key="5">
    <citation type="journal article" date="2015" name="Dev. Neurobiol.">
        <title>Akhirin regulates the proliferation and differentiation of neural stem cells in intact and injured mouse spinal cord.</title>
        <authorList>
            <person name="Abdulhaleem F.A."/>
            <person name="Song X."/>
            <person name="Kawano R."/>
            <person name="Uezono N."/>
            <person name="Ito A."/>
            <person name="Ahmed G."/>
            <person name="Hossain M."/>
            <person name="Nakashima K."/>
            <person name="Tanaka H."/>
            <person name="Ohta K."/>
        </authorList>
    </citation>
    <scope>DEVELOPMENTAL STAGE</scope>
    <scope>DISRUPTION PHENOTYPE</scope>
    <scope>INDUCTION</scope>
    <scope>FUNCTION</scope>
</reference>
<dbReference type="EMBL" id="AF454755">
    <property type="protein sequence ID" value="AAL57848.1"/>
    <property type="molecule type" value="mRNA"/>
</dbReference>
<dbReference type="EMBL" id="AK013193">
    <property type="protein sequence ID" value="BAB28702.1"/>
    <property type="molecule type" value="mRNA"/>
</dbReference>
<dbReference type="EMBL" id="AK051606">
    <property type="protein sequence ID" value="BAC34688.1"/>
    <property type="molecule type" value="mRNA"/>
</dbReference>
<dbReference type="EMBL" id="AK158117">
    <property type="protein sequence ID" value="BAE34363.1"/>
    <property type="molecule type" value="mRNA"/>
</dbReference>
<dbReference type="EMBL" id="BC034120">
    <property type="protein sequence ID" value="AAH34120.1"/>
    <property type="molecule type" value="mRNA"/>
</dbReference>
<dbReference type="CCDS" id="CCDS37696.1">
    <molecule id="Q8VHI5-1"/>
</dbReference>
<dbReference type="CCDS" id="CCDS89157.1">
    <molecule id="Q8VHI5-2"/>
</dbReference>
<dbReference type="RefSeq" id="NP_001183957.1">
    <property type="nucleotide sequence ID" value="NM_001197028.1"/>
</dbReference>
<dbReference type="RefSeq" id="NP_083089.1">
    <molecule id="Q8VHI5-1"/>
    <property type="nucleotide sequence ID" value="NM_028813.2"/>
</dbReference>
<dbReference type="SMR" id="Q8VHI5"/>
<dbReference type="BioGRID" id="216570">
    <property type="interactions" value="3"/>
</dbReference>
<dbReference type="FunCoup" id="Q8VHI5">
    <property type="interactions" value="69"/>
</dbReference>
<dbReference type="STRING" id="10090.ENSMUSP00000024880"/>
<dbReference type="GlyCosmos" id="Q8VHI5">
    <property type="glycosylation" value="1 site, No reported glycans"/>
</dbReference>
<dbReference type="GlyGen" id="Q8VHI5">
    <property type="glycosylation" value="1 site, 1 N-linked glycan (1 site)"/>
</dbReference>
<dbReference type="iPTMnet" id="Q8VHI5"/>
<dbReference type="PhosphoSitePlus" id="Q8VHI5"/>
<dbReference type="jPOST" id="Q8VHI5"/>
<dbReference type="PaxDb" id="10090-ENSMUSP00000024880"/>
<dbReference type="ProteomicsDB" id="297924">
    <molecule id="Q8VHI5-1"/>
</dbReference>
<dbReference type="ProteomicsDB" id="297925">
    <molecule id="Q8VHI5-2"/>
</dbReference>
<dbReference type="Antibodypedia" id="29304">
    <property type="antibodies" value="56 antibodies from 14 providers"/>
</dbReference>
<dbReference type="DNASU" id="74199"/>
<dbReference type="Ensembl" id="ENSMUST00000024880.11">
    <molecule id="Q8VHI5-1"/>
    <property type="protein sequence ID" value="ENSMUSP00000024880.10"/>
    <property type="gene ID" value="ENSMUSG00000024076.11"/>
</dbReference>
<dbReference type="GeneID" id="74199"/>
<dbReference type="KEGG" id="mmu:74199"/>
<dbReference type="UCSC" id="uc008dox.2">
    <molecule id="Q8VHI5-1"/>
    <property type="organism name" value="mouse"/>
</dbReference>
<dbReference type="UCSC" id="uc012axj.1">
    <molecule id="Q8VHI5-2"/>
    <property type="organism name" value="mouse"/>
</dbReference>
<dbReference type="AGR" id="MGI:1921449"/>
<dbReference type="CTD" id="5212"/>
<dbReference type="MGI" id="MGI:1921449">
    <property type="gene designation" value="Vit"/>
</dbReference>
<dbReference type="VEuPathDB" id="HostDB:ENSMUSG00000024076"/>
<dbReference type="eggNOG" id="KOG1216">
    <property type="taxonomic scope" value="Eukaryota"/>
</dbReference>
<dbReference type="GeneTree" id="ENSGT00940000159330"/>
<dbReference type="HOGENOM" id="CLU_019512_0_0_1"/>
<dbReference type="InParanoid" id="Q8VHI5"/>
<dbReference type="OMA" id="VMEPNFA"/>
<dbReference type="OrthoDB" id="441660at2759"/>
<dbReference type="PhylomeDB" id="Q8VHI5"/>
<dbReference type="TreeFam" id="TF318242"/>
<dbReference type="BioGRID-ORCS" id="74199">
    <property type="hits" value="1 hit in 75 CRISPR screens"/>
</dbReference>
<dbReference type="ChiTaRS" id="Vit">
    <property type="organism name" value="mouse"/>
</dbReference>
<dbReference type="PRO" id="PR:Q8VHI5"/>
<dbReference type="Proteomes" id="UP000000589">
    <property type="component" value="Chromosome 17"/>
</dbReference>
<dbReference type="RNAct" id="Q8VHI5">
    <property type="molecule type" value="protein"/>
</dbReference>
<dbReference type="Bgee" id="ENSMUSG00000024076">
    <property type="expression patterns" value="Expressed in epithelium of lens and 149 other cell types or tissues"/>
</dbReference>
<dbReference type="ExpressionAtlas" id="Q8VHI5">
    <property type="expression patterns" value="baseline and differential"/>
</dbReference>
<dbReference type="GO" id="GO:0031012">
    <property type="term" value="C:extracellular matrix"/>
    <property type="evidence" value="ECO:0000314"/>
    <property type="project" value="MGI"/>
</dbReference>
<dbReference type="GO" id="GO:0005576">
    <property type="term" value="C:extracellular region"/>
    <property type="evidence" value="ECO:0007669"/>
    <property type="project" value="UniProtKB-KW"/>
</dbReference>
<dbReference type="GO" id="GO:0005614">
    <property type="term" value="C:interstitial matrix"/>
    <property type="evidence" value="ECO:0000314"/>
    <property type="project" value="MGI"/>
</dbReference>
<dbReference type="GO" id="GO:0005539">
    <property type="term" value="F:glycosaminoglycan binding"/>
    <property type="evidence" value="ECO:0000314"/>
    <property type="project" value="MGI"/>
</dbReference>
<dbReference type="GO" id="GO:0030198">
    <property type="term" value="P:extracellular matrix organization"/>
    <property type="evidence" value="ECO:0000314"/>
    <property type="project" value="MGI"/>
</dbReference>
<dbReference type="GO" id="GO:0010811">
    <property type="term" value="P:positive regulation of cell-substrate adhesion"/>
    <property type="evidence" value="ECO:0000314"/>
    <property type="project" value="MGI"/>
</dbReference>
<dbReference type="GO" id="GO:0021510">
    <property type="term" value="P:spinal cord development"/>
    <property type="evidence" value="ECO:0000315"/>
    <property type="project" value="UniProtKB"/>
</dbReference>
<dbReference type="CDD" id="cd01472">
    <property type="entry name" value="vWA_collagen"/>
    <property type="match status" value="1"/>
</dbReference>
<dbReference type="FunFam" id="2.170.130.20:FF:000001">
    <property type="entry name" value="Cysteine-rich secretory protein LCCL domain-containing 1"/>
    <property type="match status" value="1"/>
</dbReference>
<dbReference type="FunFam" id="3.40.50.410:FF:000009">
    <property type="entry name" value="Putative vitrin"/>
    <property type="match status" value="1"/>
</dbReference>
<dbReference type="FunFam" id="3.40.50.410:FF:000025">
    <property type="entry name" value="Vitrin"/>
    <property type="match status" value="1"/>
</dbReference>
<dbReference type="Gene3D" id="2.170.130.20">
    <property type="entry name" value="LCCL-like domain"/>
    <property type="match status" value="1"/>
</dbReference>
<dbReference type="Gene3D" id="3.40.50.410">
    <property type="entry name" value="von Willebrand factor, type A domain"/>
    <property type="match status" value="2"/>
</dbReference>
<dbReference type="InterPro" id="IPR050525">
    <property type="entry name" value="ECM_Assembly_Org"/>
</dbReference>
<dbReference type="InterPro" id="IPR004043">
    <property type="entry name" value="LCCL"/>
</dbReference>
<dbReference type="InterPro" id="IPR036609">
    <property type="entry name" value="LCCL_sf"/>
</dbReference>
<dbReference type="InterPro" id="IPR002035">
    <property type="entry name" value="VWF_A"/>
</dbReference>
<dbReference type="InterPro" id="IPR036465">
    <property type="entry name" value="vWFA_dom_sf"/>
</dbReference>
<dbReference type="PANTHER" id="PTHR24020">
    <property type="entry name" value="COLLAGEN ALPHA"/>
    <property type="match status" value="1"/>
</dbReference>
<dbReference type="PANTHER" id="PTHR24020:SF23">
    <property type="entry name" value="VITRIN"/>
    <property type="match status" value="1"/>
</dbReference>
<dbReference type="Pfam" id="PF03815">
    <property type="entry name" value="LCCL"/>
    <property type="match status" value="1"/>
</dbReference>
<dbReference type="Pfam" id="PF00092">
    <property type="entry name" value="VWA"/>
    <property type="match status" value="2"/>
</dbReference>
<dbReference type="PRINTS" id="PR00453">
    <property type="entry name" value="VWFADOMAIN"/>
</dbReference>
<dbReference type="SMART" id="SM00603">
    <property type="entry name" value="LCCL"/>
    <property type="match status" value="1"/>
</dbReference>
<dbReference type="SMART" id="SM00327">
    <property type="entry name" value="VWA"/>
    <property type="match status" value="2"/>
</dbReference>
<dbReference type="SUPFAM" id="SSF69848">
    <property type="entry name" value="LCCL domain"/>
    <property type="match status" value="1"/>
</dbReference>
<dbReference type="SUPFAM" id="SSF53300">
    <property type="entry name" value="vWA-like"/>
    <property type="match status" value="2"/>
</dbReference>
<dbReference type="PROSITE" id="PS50820">
    <property type="entry name" value="LCCL"/>
    <property type="match status" value="1"/>
</dbReference>
<dbReference type="PROSITE" id="PS50234">
    <property type="entry name" value="VWFA"/>
    <property type="match status" value="2"/>
</dbReference>
<accession>Q8VHI5</accession>
<accession>Q3TZ47</accession>
<accession>Q8BQ41</accession>
<accession>Q8K047</accession>
<accession>Q9CYZ1</accession>
<evidence type="ECO:0000255" key="1"/>
<evidence type="ECO:0000255" key="2">
    <source>
        <dbReference type="PROSITE-ProRule" id="PRU00123"/>
    </source>
</evidence>
<evidence type="ECO:0000255" key="3">
    <source>
        <dbReference type="PROSITE-ProRule" id="PRU00219"/>
    </source>
</evidence>
<evidence type="ECO:0000256" key="4">
    <source>
        <dbReference type="SAM" id="MobiDB-lite"/>
    </source>
</evidence>
<evidence type="ECO:0000269" key="5">
    <source>
    </source>
</evidence>
<evidence type="ECO:0000269" key="6">
    <source>
    </source>
</evidence>
<evidence type="ECO:0000303" key="7">
    <source>
    </source>
</evidence>
<evidence type="ECO:0000303" key="8">
    <source>
    </source>
</evidence>
<evidence type="ECO:0000305" key="9"/>
<sequence>MGIVVPTMKASVIEVLLVLLVTGIHSNKETPKKTKRPKLTVPQINCDVKAGKIINPEFMVKCPAGCQDPKYHVYGTGVYASYSSVCGAAIHSGVLDNSGGKILVRKVAGQSGYKGSYSNGVQSLSLPRWRESFIVAESKPQKGVAYPSTLTYSSSKTAAAKAGETTKAYEKPSIPGTTIQPVTLTQAQATPVAEVTHRSTSKPFAASVTNSPRPQPVGHRSQEMEEVDGWKPGPVLLDSGFVPKEELSTQSSEPVPQGDPNCKIDLSFLIDGSTSIGKRRFRIQKQFLADVVQALDIGPAGPLVGVVQYGDNPATQFNLKTHMNSQDLKTAIEKITQRGGLSNVGRAISFVTKTFFSKANGNRGGAPNVAVVMVDGWPTDKVEEVSRVARESGINVFFITVEGAAERDIQHVVEPGFASKAVCRTNGFYSFNVQSWLSLHKTVQPLVKRVCDTDRLACSKTCLNSADIGFVIDGSSSMGTSNFRTVLQFVANLSKEFEISDTDTRVGAVQYTYEQRLEFGFDKYNSKADILSAIRRVGYWSGGTSTGAAIQYALEQLFKKSKPNKRKVMIIITDGRSYDDVRIPAMAAYQKGVITYAIGIAWAAQDELEVMATHPAKDHSFFVDDFDNLYKIAPRIIQNICTEFNSQPRN</sequence>
<name>VITRN_MOUSE</name>
<organism>
    <name type="scientific">Mus musculus</name>
    <name type="common">Mouse</name>
    <dbReference type="NCBI Taxonomy" id="10090"/>
    <lineage>
        <taxon>Eukaryota</taxon>
        <taxon>Metazoa</taxon>
        <taxon>Chordata</taxon>
        <taxon>Craniata</taxon>
        <taxon>Vertebrata</taxon>
        <taxon>Euteleostomi</taxon>
        <taxon>Mammalia</taxon>
        <taxon>Eutheria</taxon>
        <taxon>Euarchontoglires</taxon>
        <taxon>Glires</taxon>
        <taxon>Rodentia</taxon>
        <taxon>Myomorpha</taxon>
        <taxon>Muroidea</taxon>
        <taxon>Muridae</taxon>
        <taxon>Murinae</taxon>
        <taxon>Mus</taxon>
        <taxon>Mus</taxon>
    </lineage>
</organism>
<gene>
    <name type="primary">Vit</name>
    <name evidence="8" type="synonym">Akh</name>
</gene>
<proteinExistence type="evidence at protein level"/>
<comment type="function">
    <text evidence="5 6">Promotes matrix assembly and cell adhesiveness (PubMed:18757743). Plays a role in spinal cord formation by regulating the proliferation and differentiation of neural stem cells (PubMed:25331329).</text>
</comment>
<comment type="subunit">
    <text evidence="5">Binds dermatan sulfate and chondroitin sulfate.</text>
</comment>
<comment type="subcellular location">
    <subcellularLocation>
        <location evidence="5">Secreted</location>
        <location evidence="5">Extracellular space</location>
        <location evidence="5">Extracellular matrix</location>
    </subcellularLocation>
</comment>
<comment type="alternative products">
    <event type="alternative splicing"/>
    <isoform>
        <id>Q8VHI5-1</id>
        <name>1</name>
        <sequence type="displayed"/>
    </isoform>
    <isoform>
        <id>Q8VHI5-2</id>
        <name>2</name>
        <sequence type="described" ref="VSP_020212"/>
    </isoform>
</comment>
<comment type="developmental stage">
    <text evidence="5 6">At 16.5 dpc, present in skull base cartilage (at protein level) (PubMed:18757743). Expressed in the floor plate as early as 9.5 dpc and shifted to the central canal area from 13.5 dpc. At 15.5 dpc, the expression is restricted to the ventral midline region (PubMed:25331329).</text>
</comment>
<comment type="induction">
    <text evidence="6">Highly up-regulated in the injured spinal cord.</text>
</comment>
<comment type="disruption phenotype">
    <text evidence="6">Embryos show decreased spinal cord size associated with reduced cell proliferation and altered cell differentiation in the central canal of the neural tube.</text>
</comment>
<protein>
    <recommendedName>
        <fullName>Vitrin</fullName>
    </recommendedName>
    <alternativeName>
        <fullName evidence="8">Akhirin</fullName>
    </alternativeName>
</protein>
<feature type="signal peptide" evidence="1">
    <location>
        <begin position="1"/>
        <end position="26"/>
    </location>
</feature>
<feature type="chain" id="PRO_0000248211" description="Vitrin">
    <location>
        <begin position="27"/>
        <end position="650"/>
    </location>
</feature>
<feature type="domain" description="LCCL" evidence="2">
    <location>
        <begin position="40"/>
        <end position="133"/>
    </location>
</feature>
<feature type="domain" description="VWFA 1" evidence="3">
    <location>
        <begin position="265"/>
        <end position="450"/>
    </location>
</feature>
<feature type="domain" description="VWFA 2" evidence="3">
    <location>
        <begin position="467"/>
        <end position="640"/>
    </location>
</feature>
<feature type="region of interest" description="Disordered" evidence="4">
    <location>
        <begin position="198"/>
        <end position="226"/>
    </location>
</feature>
<feature type="glycosylation site" description="N-linked (GlcNAc...) asparagine" evidence="1">
    <location>
        <position position="492"/>
    </location>
</feature>
<feature type="disulfide bond" evidence="2">
    <location>
        <begin position="46"/>
        <end position="62"/>
    </location>
</feature>
<feature type="disulfide bond" evidence="2">
    <location>
        <begin position="66"/>
        <end position="86"/>
    </location>
</feature>
<feature type="splice variant" id="VSP_020212" description="In isoform 2." evidence="7">
    <location>
        <begin position="18"/>
        <end position="39"/>
    </location>
</feature>
<feature type="sequence conflict" description="In Ref. 1; AAL57848 and 2; BAE34363." evidence="9" ref="1 2">
    <original>P</original>
    <variation>L</variation>
    <location>
        <position position="6"/>
    </location>
</feature>
<feature type="sequence conflict" description="In Ref. 2; BAC34688." evidence="9" ref="2">
    <original>T</original>
    <variation>A</variation>
    <location>
        <position position="40"/>
    </location>
</feature>
<feature type="sequence conflict" description="In Ref. 2; BAE34363." evidence="9" ref="2">
    <original>I</original>
    <variation>V</variation>
    <location>
        <position position="90"/>
    </location>
</feature>
<feature type="sequence conflict" description="In Ref. 1; AAL57848 and 2; BAE34363." evidence="9" ref="1 2">
    <original>Q</original>
    <variation>R</variation>
    <location>
        <position position="188"/>
    </location>
</feature>
<feature type="sequence conflict" description="In Ref. 1; AAL57848 and 2; BAE34363." evidence="9" ref="1 2">
    <original>V</original>
    <variation>A</variation>
    <location>
        <position position="195"/>
    </location>
</feature>
<feature type="sequence conflict" description="In Ref. 1; AAL57848 and 2; BAE34363." evidence="9" ref="1 2">
    <original>S</original>
    <variation>P</variation>
    <location>
        <position position="199"/>
    </location>
</feature>
<feature type="sequence conflict" description="In Ref. 1; AAL57848 and 2; BAE34363." evidence="9" ref="1 2">
    <original>N</original>
    <variation>S</variation>
    <location>
        <position position="210"/>
    </location>
</feature>
<feature type="sequence conflict" description="In Ref. 1; AAL57848 and 2; BAE34363." evidence="9" ref="1 2">
    <original>S</original>
    <variation>G</variation>
    <location>
        <position position="275"/>
    </location>
</feature>
<feature type="sequence conflict" description="In Ref. 2; BAE34363." evidence="9" ref="2">
    <original>Q</original>
    <variation>K</variation>
    <location>
        <position position="337"/>
    </location>
</feature>
<feature type="sequence conflict" description="In Ref. 1; AAL57848 and 2; BAE34363." evidence="9" ref="1 2">
    <original>DI</original>
    <variation>EK</variation>
    <location>
        <begin position="408"/>
        <end position="409"/>
    </location>
</feature>
<feature type="sequence conflict" description="In Ref. 1; AAL57848." evidence="9" ref="1">
    <original>G</original>
    <variation>V</variation>
    <location>
        <position position="416"/>
    </location>
</feature>
<feature type="sequence conflict" description="In Ref. 1; AAL57848 and 2; BAE34363." evidence="9" ref="1 2">
    <original>M</original>
    <variation>V</variation>
    <location>
        <position position="478"/>
    </location>
</feature>
<feature type="sequence conflict" description="In Ref. 1; AAL57848." evidence="9" ref="1">
    <original>E</original>
    <variation>Q</variation>
    <location>
        <position position="518"/>
    </location>
</feature>
<feature type="sequence conflict" description="In Ref. 2; BAB28702." evidence="9" ref="2">
    <original>Y</original>
    <variation>C</variation>
    <location>
        <position position="589"/>
    </location>
</feature>
<keyword id="KW-0025">Alternative splicing</keyword>
<keyword id="KW-1015">Disulfide bond</keyword>
<keyword id="KW-0272">Extracellular matrix</keyword>
<keyword id="KW-0325">Glycoprotein</keyword>
<keyword id="KW-0524">Neurogenesis</keyword>
<keyword id="KW-1185">Reference proteome</keyword>
<keyword id="KW-0677">Repeat</keyword>
<keyword id="KW-0964">Secreted</keyword>
<keyword id="KW-0732">Signal</keyword>